<protein>
    <recommendedName>
        <fullName evidence="1">NAD-dependent malic enzyme</fullName>
        <shortName evidence="1">NAD-ME</shortName>
        <ecNumber evidence="1">1.1.1.38</ecNumber>
    </recommendedName>
</protein>
<dbReference type="EC" id="1.1.1.38" evidence="1"/>
<dbReference type="EMBL" id="CP001164">
    <property type="protein sequence ID" value="ACI35372.1"/>
    <property type="molecule type" value="Genomic_DNA"/>
</dbReference>
<dbReference type="RefSeq" id="WP_000433455.1">
    <property type="nucleotide sequence ID" value="NC_011353.1"/>
</dbReference>
<dbReference type="SMR" id="B5Z1T9"/>
<dbReference type="KEGG" id="ecf:ECH74115_2091"/>
<dbReference type="HOGENOM" id="CLU_011405_5_2_6"/>
<dbReference type="GO" id="GO:0005829">
    <property type="term" value="C:cytosol"/>
    <property type="evidence" value="ECO:0007669"/>
    <property type="project" value="TreeGrafter"/>
</dbReference>
<dbReference type="GO" id="GO:0004471">
    <property type="term" value="F:malate dehydrogenase (decarboxylating) (NAD+) activity"/>
    <property type="evidence" value="ECO:0007669"/>
    <property type="project" value="UniProtKB-UniRule"/>
</dbReference>
<dbReference type="GO" id="GO:0046872">
    <property type="term" value="F:metal ion binding"/>
    <property type="evidence" value="ECO:0007669"/>
    <property type="project" value="UniProtKB-KW"/>
</dbReference>
<dbReference type="GO" id="GO:0051287">
    <property type="term" value="F:NAD binding"/>
    <property type="evidence" value="ECO:0007669"/>
    <property type="project" value="InterPro"/>
</dbReference>
<dbReference type="GO" id="GO:0008948">
    <property type="term" value="F:oxaloacetate decarboxylase activity"/>
    <property type="evidence" value="ECO:0007669"/>
    <property type="project" value="UniProtKB-UniRule"/>
</dbReference>
<dbReference type="GO" id="GO:0006108">
    <property type="term" value="P:malate metabolic process"/>
    <property type="evidence" value="ECO:0007669"/>
    <property type="project" value="TreeGrafter"/>
</dbReference>
<dbReference type="CDD" id="cd05312">
    <property type="entry name" value="NAD_bind_1_malic_enz"/>
    <property type="match status" value="1"/>
</dbReference>
<dbReference type="FunFam" id="3.40.50.10380:FF:000001">
    <property type="entry name" value="NAD-dependent malic enzyme"/>
    <property type="match status" value="1"/>
</dbReference>
<dbReference type="FunFam" id="3.40.50.720:FF:000055">
    <property type="entry name" value="NAD-dependent malic enzyme"/>
    <property type="match status" value="1"/>
</dbReference>
<dbReference type="Gene3D" id="3.40.50.10380">
    <property type="entry name" value="Malic enzyme, N-terminal domain"/>
    <property type="match status" value="1"/>
</dbReference>
<dbReference type="Gene3D" id="3.40.50.720">
    <property type="entry name" value="NAD(P)-binding Rossmann-like Domain"/>
    <property type="match status" value="1"/>
</dbReference>
<dbReference type="HAMAP" id="MF_01619">
    <property type="entry name" value="NAD_malic_enz"/>
    <property type="match status" value="1"/>
</dbReference>
<dbReference type="InterPro" id="IPR046346">
    <property type="entry name" value="Aminoacid_DH-like_N_sf"/>
</dbReference>
<dbReference type="InterPro" id="IPR015884">
    <property type="entry name" value="Malic_enzyme_CS"/>
</dbReference>
<dbReference type="InterPro" id="IPR012301">
    <property type="entry name" value="Malic_N_dom"/>
</dbReference>
<dbReference type="InterPro" id="IPR037062">
    <property type="entry name" value="Malic_N_dom_sf"/>
</dbReference>
<dbReference type="InterPro" id="IPR012302">
    <property type="entry name" value="Malic_NAD-bd"/>
</dbReference>
<dbReference type="InterPro" id="IPR001891">
    <property type="entry name" value="Malic_OxRdtase"/>
</dbReference>
<dbReference type="InterPro" id="IPR036291">
    <property type="entry name" value="NAD(P)-bd_dom_sf"/>
</dbReference>
<dbReference type="InterPro" id="IPR023667">
    <property type="entry name" value="NAD_malic_enz_proteobac"/>
</dbReference>
<dbReference type="NCBIfam" id="NF010052">
    <property type="entry name" value="PRK13529.1"/>
    <property type="match status" value="1"/>
</dbReference>
<dbReference type="PANTHER" id="PTHR23406">
    <property type="entry name" value="MALIC ENZYME-RELATED"/>
    <property type="match status" value="1"/>
</dbReference>
<dbReference type="PANTHER" id="PTHR23406:SF34">
    <property type="entry name" value="NAD-DEPENDENT MALIC ENZYME, MITOCHONDRIAL"/>
    <property type="match status" value="1"/>
</dbReference>
<dbReference type="Pfam" id="PF00390">
    <property type="entry name" value="malic"/>
    <property type="match status" value="1"/>
</dbReference>
<dbReference type="Pfam" id="PF03949">
    <property type="entry name" value="Malic_M"/>
    <property type="match status" value="1"/>
</dbReference>
<dbReference type="PIRSF" id="PIRSF000106">
    <property type="entry name" value="ME"/>
    <property type="match status" value="1"/>
</dbReference>
<dbReference type="PRINTS" id="PR00072">
    <property type="entry name" value="MALOXRDTASE"/>
</dbReference>
<dbReference type="SMART" id="SM01274">
    <property type="entry name" value="malic"/>
    <property type="match status" value="1"/>
</dbReference>
<dbReference type="SMART" id="SM00919">
    <property type="entry name" value="Malic_M"/>
    <property type="match status" value="1"/>
</dbReference>
<dbReference type="SUPFAM" id="SSF53223">
    <property type="entry name" value="Aminoacid dehydrogenase-like, N-terminal domain"/>
    <property type="match status" value="1"/>
</dbReference>
<dbReference type="SUPFAM" id="SSF51735">
    <property type="entry name" value="NAD(P)-binding Rossmann-fold domains"/>
    <property type="match status" value="1"/>
</dbReference>
<dbReference type="PROSITE" id="PS00331">
    <property type="entry name" value="MALIC_ENZYMES"/>
    <property type="match status" value="1"/>
</dbReference>
<sequence>MEPKTKKQRSLYIPYAGPVLLEFPLLNKGSAFSMEERRNFNLLGLLPEVVETIEEQAERAWIQYQGFKTEIDKHIYLRNIQDTNETLFYRLVNNHLDEMMPVIYTPTVGAACERFSEIYRRSRGVFISYQNRHNMDDILQNVPNHNIKVIVVTDGERILGLGDQGIGGMGIPIGKLSLYTACGGISPAYTLPVVLDVGTNNQQLLNDPLYMGWRNPRITDDEYYEFVDEFIQAVKQRWPDVLLQFEDFAQKNAMPLLNRYRNEICSFNDDIQGTAAVTVGTLIAASRAAGGQLSEKKIVFLGAGSAGCGIAEMIIAQTQREGLSEEAARQKVFMVDRFGLLTDKMPNLLPFQTKLVQKRENLSDRDTDSDVLSLLDVVRNVKPDILIGVSGQTGLFTEEIIREMHKHCPRPIVMPLSNPTSRVEATPQDIIAWTEGNALVATGSPFNPVVWKDKIYPIAQCNNAFIFPGIGLGVIASGASRITDEMLMSASETLAQYSPLVLNGEGLVLPELKDIQKVSRAIAFAVGKMAQQQGVAVKTSAEALQQAIDDNFWQAEYRDYRRTSI</sequence>
<comment type="catalytic activity">
    <reaction evidence="1">
        <text>(S)-malate + NAD(+) = pyruvate + CO2 + NADH</text>
        <dbReference type="Rhea" id="RHEA:12653"/>
        <dbReference type="ChEBI" id="CHEBI:15361"/>
        <dbReference type="ChEBI" id="CHEBI:15589"/>
        <dbReference type="ChEBI" id="CHEBI:16526"/>
        <dbReference type="ChEBI" id="CHEBI:57540"/>
        <dbReference type="ChEBI" id="CHEBI:57945"/>
        <dbReference type="EC" id="1.1.1.38"/>
    </reaction>
</comment>
<comment type="catalytic activity">
    <reaction evidence="1">
        <text>oxaloacetate + H(+) = pyruvate + CO2</text>
        <dbReference type="Rhea" id="RHEA:15641"/>
        <dbReference type="ChEBI" id="CHEBI:15361"/>
        <dbReference type="ChEBI" id="CHEBI:15378"/>
        <dbReference type="ChEBI" id="CHEBI:16452"/>
        <dbReference type="ChEBI" id="CHEBI:16526"/>
        <dbReference type="EC" id="1.1.1.38"/>
    </reaction>
</comment>
<comment type="cofactor">
    <cofactor evidence="1">
        <name>Mg(2+)</name>
        <dbReference type="ChEBI" id="CHEBI:18420"/>
    </cofactor>
    <cofactor evidence="1">
        <name>Mn(2+)</name>
        <dbReference type="ChEBI" id="CHEBI:29035"/>
    </cofactor>
    <text evidence="1">Divalent metal cations. Prefers magnesium or manganese.</text>
</comment>
<comment type="subunit">
    <text evidence="1">Homotetramer.</text>
</comment>
<comment type="similarity">
    <text evidence="1">Belongs to the malic enzymes family.</text>
</comment>
<evidence type="ECO:0000255" key="1">
    <source>
        <dbReference type="HAMAP-Rule" id="MF_01619"/>
    </source>
</evidence>
<accession>B5Z1T9</accession>
<organism>
    <name type="scientific">Escherichia coli O157:H7 (strain EC4115 / EHEC)</name>
    <dbReference type="NCBI Taxonomy" id="444450"/>
    <lineage>
        <taxon>Bacteria</taxon>
        <taxon>Pseudomonadati</taxon>
        <taxon>Pseudomonadota</taxon>
        <taxon>Gammaproteobacteria</taxon>
        <taxon>Enterobacterales</taxon>
        <taxon>Enterobacteriaceae</taxon>
        <taxon>Escherichia</taxon>
    </lineage>
</organism>
<gene>
    <name evidence="1" type="primary">maeA</name>
    <name type="ordered locus">ECH74115_2091</name>
</gene>
<feature type="chain" id="PRO_1000185991" description="NAD-dependent malic enzyme">
    <location>
        <begin position="1"/>
        <end position="565"/>
    </location>
</feature>
<feature type="active site" description="Proton donor" evidence="1">
    <location>
        <position position="104"/>
    </location>
</feature>
<feature type="active site" description="Proton acceptor" evidence="1">
    <location>
        <position position="175"/>
    </location>
</feature>
<feature type="binding site" evidence="1">
    <location>
        <position position="157"/>
    </location>
    <ligand>
        <name>NAD(+)</name>
        <dbReference type="ChEBI" id="CHEBI:57540"/>
    </ligand>
</feature>
<feature type="binding site" evidence="1">
    <location>
        <position position="246"/>
    </location>
    <ligand>
        <name>a divalent metal cation</name>
        <dbReference type="ChEBI" id="CHEBI:60240"/>
    </ligand>
</feature>
<feature type="binding site" evidence="1">
    <location>
        <position position="247"/>
    </location>
    <ligand>
        <name>a divalent metal cation</name>
        <dbReference type="ChEBI" id="CHEBI:60240"/>
    </ligand>
</feature>
<feature type="binding site" evidence="1">
    <location>
        <position position="270"/>
    </location>
    <ligand>
        <name>a divalent metal cation</name>
        <dbReference type="ChEBI" id="CHEBI:60240"/>
    </ligand>
</feature>
<feature type="binding site" evidence="1">
    <location>
        <position position="270"/>
    </location>
    <ligand>
        <name>NAD(+)</name>
        <dbReference type="ChEBI" id="CHEBI:57540"/>
    </ligand>
</feature>
<feature type="binding site" evidence="1">
    <location>
        <position position="418"/>
    </location>
    <ligand>
        <name>NAD(+)</name>
        <dbReference type="ChEBI" id="CHEBI:57540"/>
    </ligand>
</feature>
<feature type="site" description="Important for activity" evidence="1">
    <location>
        <position position="270"/>
    </location>
</feature>
<keyword id="KW-0479">Metal-binding</keyword>
<keyword id="KW-0520">NAD</keyword>
<keyword id="KW-0560">Oxidoreductase</keyword>
<proteinExistence type="inferred from homology"/>
<name>MAO1_ECO5E</name>
<reference key="1">
    <citation type="journal article" date="2011" name="Proc. Natl. Acad. Sci. U.S.A.">
        <title>Genomic anatomy of Escherichia coli O157:H7 outbreaks.</title>
        <authorList>
            <person name="Eppinger M."/>
            <person name="Mammel M.K."/>
            <person name="Leclerc J.E."/>
            <person name="Ravel J."/>
            <person name="Cebula T.A."/>
        </authorList>
    </citation>
    <scope>NUCLEOTIDE SEQUENCE [LARGE SCALE GENOMIC DNA]</scope>
    <source>
        <strain>EC4115 / EHEC</strain>
    </source>
</reference>